<keyword id="KW-0547">Nucleotide-binding</keyword>
<keyword id="KW-1185">Reference proteome</keyword>
<sequence length="160" mass="17973">MPSFDIVSEVEMNEAKNAVDNANRELETRFDFRGVDASIELNDKVIKLKAEADSQVIQLFDILASKISKRGMDVSSLELQDISRAGKNVFRNVGLKQGIEKEMAKKIVKAIKDSKVKVQAAIQGEEVRVTGKKRDDLQEAMQVVRSADLGQPFQFKNFRD</sequence>
<accession>Q3IHS5</accession>
<dbReference type="EMBL" id="CR954246">
    <property type="protein sequence ID" value="CAI87333.1"/>
    <property type="molecule type" value="Genomic_DNA"/>
</dbReference>
<dbReference type="SMR" id="Q3IHS5"/>
<dbReference type="STRING" id="326442.PSHAa2277"/>
<dbReference type="KEGG" id="pha:PSHAa2277"/>
<dbReference type="PATRIC" id="fig|326442.8.peg.2197"/>
<dbReference type="eggNOG" id="COG1666">
    <property type="taxonomic scope" value="Bacteria"/>
</dbReference>
<dbReference type="HOGENOM" id="CLU_099839_1_0_6"/>
<dbReference type="BioCyc" id="PHAL326442:PSHA_RS11230-MONOMER"/>
<dbReference type="Proteomes" id="UP000006843">
    <property type="component" value="Chromosome I"/>
</dbReference>
<dbReference type="GO" id="GO:0005829">
    <property type="term" value="C:cytosol"/>
    <property type="evidence" value="ECO:0007669"/>
    <property type="project" value="TreeGrafter"/>
</dbReference>
<dbReference type="GO" id="GO:0000166">
    <property type="term" value="F:nucleotide binding"/>
    <property type="evidence" value="ECO:0007669"/>
    <property type="project" value="TreeGrafter"/>
</dbReference>
<dbReference type="CDD" id="cd11740">
    <property type="entry name" value="YajQ_like"/>
    <property type="match status" value="1"/>
</dbReference>
<dbReference type="FunFam" id="3.30.70.860:FF:000001">
    <property type="entry name" value="UPF0234 protein YajQ"/>
    <property type="match status" value="1"/>
</dbReference>
<dbReference type="Gene3D" id="3.30.70.860">
    <property type="match status" value="1"/>
</dbReference>
<dbReference type="Gene3D" id="3.30.70.990">
    <property type="entry name" value="YajQ-like, domain 2"/>
    <property type="match status" value="1"/>
</dbReference>
<dbReference type="HAMAP" id="MF_00632">
    <property type="entry name" value="YajQ"/>
    <property type="match status" value="1"/>
</dbReference>
<dbReference type="InterPro" id="IPR007551">
    <property type="entry name" value="DUF520"/>
</dbReference>
<dbReference type="InterPro" id="IPR035571">
    <property type="entry name" value="UPF0234-like_C"/>
</dbReference>
<dbReference type="InterPro" id="IPR035570">
    <property type="entry name" value="UPF0234_N"/>
</dbReference>
<dbReference type="InterPro" id="IPR036183">
    <property type="entry name" value="YajQ-like_sf"/>
</dbReference>
<dbReference type="NCBIfam" id="NF003819">
    <property type="entry name" value="PRK05412.1"/>
    <property type="match status" value="1"/>
</dbReference>
<dbReference type="PANTHER" id="PTHR30476">
    <property type="entry name" value="UPF0234 PROTEIN YAJQ"/>
    <property type="match status" value="1"/>
</dbReference>
<dbReference type="PANTHER" id="PTHR30476:SF0">
    <property type="entry name" value="UPF0234 PROTEIN YAJQ"/>
    <property type="match status" value="1"/>
</dbReference>
<dbReference type="Pfam" id="PF04461">
    <property type="entry name" value="DUF520"/>
    <property type="match status" value="1"/>
</dbReference>
<dbReference type="SUPFAM" id="SSF89963">
    <property type="entry name" value="YajQ-like"/>
    <property type="match status" value="2"/>
</dbReference>
<feature type="chain" id="PRO_0000261960" description="Nucleotide-binding protein PSHAa2277">
    <location>
        <begin position="1"/>
        <end position="160"/>
    </location>
</feature>
<organism>
    <name type="scientific">Pseudoalteromonas translucida (strain TAC 125)</name>
    <dbReference type="NCBI Taxonomy" id="326442"/>
    <lineage>
        <taxon>Bacteria</taxon>
        <taxon>Pseudomonadati</taxon>
        <taxon>Pseudomonadota</taxon>
        <taxon>Gammaproteobacteria</taxon>
        <taxon>Alteromonadales</taxon>
        <taxon>Pseudoalteromonadaceae</taxon>
        <taxon>Pseudoalteromonas</taxon>
    </lineage>
</organism>
<reference key="1">
    <citation type="journal article" date="2005" name="Genome Res.">
        <title>Coping with cold: the genome of the versatile marine Antarctica bacterium Pseudoalteromonas haloplanktis TAC125.</title>
        <authorList>
            <person name="Medigue C."/>
            <person name="Krin E."/>
            <person name="Pascal G."/>
            <person name="Barbe V."/>
            <person name="Bernsel A."/>
            <person name="Bertin P.N."/>
            <person name="Cheung F."/>
            <person name="Cruveiller S."/>
            <person name="D'Amico S."/>
            <person name="Duilio A."/>
            <person name="Fang G."/>
            <person name="Feller G."/>
            <person name="Ho C."/>
            <person name="Mangenot S."/>
            <person name="Marino G."/>
            <person name="Nilsson J."/>
            <person name="Parrilli E."/>
            <person name="Rocha E.P.C."/>
            <person name="Rouy Z."/>
            <person name="Sekowska A."/>
            <person name="Tutino M.L."/>
            <person name="Vallenet D."/>
            <person name="von Heijne G."/>
            <person name="Danchin A."/>
        </authorList>
    </citation>
    <scope>NUCLEOTIDE SEQUENCE [LARGE SCALE GENOMIC DNA]</scope>
    <source>
        <strain>TAC 125</strain>
    </source>
</reference>
<gene>
    <name type="ordered locus">PSHAa2277</name>
</gene>
<proteinExistence type="inferred from homology"/>
<protein>
    <recommendedName>
        <fullName evidence="1">Nucleotide-binding protein PSHAa2277</fullName>
    </recommendedName>
</protein>
<evidence type="ECO:0000255" key="1">
    <source>
        <dbReference type="HAMAP-Rule" id="MF_00632"/>
    </source>
</evidence>
<name>Y2277_PSET1</name>
<comment type="function">
    <text evidence="1">Nucleotide-binding protein.</text>
</comment>
<comment type="similarity">
    <text evidence="1">Belongs to the YajQ family.</text>
</comment>